<keyword id="KW-0067">ATP-binding</keyword>
<keyword id="KW-0133">Cell shape</keyword>
<keyword id="KW-0963">Cytoplasm</keyword>
<keyword id="KW-0547">Nucleotide-binding</keyword>
<keyword id="KW-1185">Reference proteome</keyword>
<name>MREB_HAEIN</name>
<feature type="chain" id="PRO_0000062761" description="Cell shape-determining protein MreB">
    <location>
        <begin position="1"/>
        <end position="351"/>
    </location>
</feature>
<feature type="binding site" evidence="1">
    <location>
        <begin position="20"/>
        <end position="22"/>
    </location>
    <ligand>
        <name>ATP</name>
        <dbReference type="ChEBI" id="CHEBI:30616"/>
    </ligand>
</feature>
<feature type="binding site" evidence="1">
    <location>
        <begin position="169"/>
        <end position="171"/>
    </location>
    <ligand>
        <name>ATP</name>
        <dbReference type="ChEBI" id="CHEBI:30616"/>
    </ligand>
</feature>
<feature type="binding site" evidence="1">
    <location>
        <begin position="217"/>
        <end position="220"/>
    </location>
    <ligand>
        <name>ATP</name>
        <dbReference type="ChEBI" id="CHEBI:30616"/>
    </ligand>
</feature>
<feature type="binding site" evidence="1">
    <location>
        <begin position="299"/>
        <end position="302"/>
    </location>
    <ligand>
        <name>ATP</name>
        <dbReference type="ChEBI" id="CHEBI:30616"/>
    </ligand>
</feature>
<proteinExistence type="inferred from homology"/>
<sequence>MLFKKIRGLFSNDLSIDLGTANTLIYVKRQGIVLDEPSVVAIRQDRVGTLKSIAAVGKEAKLMLGRTPKSIVAIRPMKDGVIADFFVTEKMLQYFIKQVHSGNFMRPSPRVLVCVPAGATQVERRAIKESAIGAGAREVYLIEEPMAAAIGAKLPVSTAVGSMVIDIGGGTTEVAVISLNGIVYSSSVRIGGDRFDEAIISYVRRTFGSVIGEPTAERIKQEIGSAYIQEGDEIKEMEVHGHNLAEGAPRSFTLTSRDVLEAIQQPLNGIVAAVRTALEECQPEHAADIFERGMVLTGGGALLRNIDILLSKESGVPVIIAEDPLTCVARGGGEALEMIDMHGGDIFSDEI</sequence>
<protein>
    <recommendedName>
        <fullName evidence="1">Cell shape-determining protein MreB</fullName>
    </recommendedName>
</protein>
<comment type="function">
    <text evidence="1">Forms membrane-associated dynamic filaments that are essential for cell shape determination. Acts by regulating cell wall synthesis and cell elongation, and thus cell shape. A feedback loop between cell geometry and MreB localization may maintain elongated cell shape by targeting cell wall growth to regions of negative cell wall curvature.</text>
</comment>
<comment type="subunit">
    <text evidence="1">Forms polymers.</text>
</comment>
<comment type="subcellular location">
    <subcellularLocation>
        <location evidence="1">Cytoplasm</location>
    </subcellularLocation>
    <text evidence="1">Membrane-associated.</text>
</comment>
<comment type="similarity">
    <text evidence="1 2">Belongs to the FtsA/MreB family.</text>
</comment>
<comment type="sequence caution" evidence="2">
    <conflict type="erroneous initiation">
        <sequence resource="EMBL-CDS" id="AAC21715"/>
    </conflict>
</comment>
<organism>
    <name type="scientific">Haemophilus influenzae (strain ATCC 51907 / DSM 11121 / KW20 / Rd)</name>
    <dbReference type="NCBI Taxonomy" id="71421"/>
    <lineage>
        <taxon>Bacteria</taxon>
        <taxon>Pseudomonadati</taxon>
        <taxon>Pseudomonadota</taxon>
        <taxon>Gammaproteobacteria</taxon>
        <taxon>Pasteurellales</taxon>
        <taxon>Pasteurellaceae</taxon>
        <taxon>Haemophilus</taxon>
    </lineage>
</organism>
<evidence type="ECO:0000255" key="1">
    <source>
        <dbReference type="HAMAP-Rule" id="MF_02207"/>
    </source>
</evidence>
<evidence type="ECO:0000305" key="2"/>
<accession>P44474</accession>
<gene>
    <name evidence="1" type="primary">mreB</name>
    <name type="ordered locus">HI_0037</name>
</gene>
<reference key="1">
    <citation type="journal article" date="1995" name="Science">
        <title>Whole-genome random sequencing and assembly of Haemophilus influenzae Rd.</title>
        <authorList>
            <person name="Fleischmann R.D."/>
            <person name="Adams M.D."/>
            <person name="White O."/>
            <person name="Clayton R.A."/>
            <person name="Kirkness E.F."/>
            <person name="Kerlavage A.R."/>
            <person name="Bult C.J."/>
            <person name="Tomb J.-F."/>
            <person name="Dougherty B.A."/>
            <person name="Merrick J.M."/>
            <person name="McKenney K."/>
            <person name="Sutton G.G."/>
            <person name="FitzHugh W."/>
            <person name="Fields C.A."/>
            <person name="Gocayne J.D."/>
            <person name="Scott J.D."/>
            <person name="Shirley R."/>
            <person name="Liu L.-I."/>
            <person name="Glodek A."/>
            <person name="Kelley J.M."/>
            <person name="Weidman J.F."/>
            <person name="Phillips C.A."/>
            <person name="Spriggs T."/>
            <person name="Hedblom E."/>
            <person name="Cotton M.D."/>
            <person name="Utterback T.R."/>
            <person name="Hanna M.C."/>
            <person name="Nguyen D.T."/>
            <person name="Saudek D.M."/>
            <person name="Brandon R.C."/>
            <person name="Fine L.D."/>
            <person name="Fritchman J.L."/>
            <person name="Fuhrmann J.L."/>
            <person name="Geoghagen N.S.M."/>
            <person name="Gnehm C.L."/>
            <person name="McDonald L.A."/>
            <person name="Small K.V."/>
            <person name="Fraser C.M."/>
            <person name="Smith H.O."/>
            <person name="Venter J.C."/>
        </authorList>
    </citation>
    <scope>NUCLEOTIDE SEQUENCE [LARGE SCALE GENOMIC DNA]</scope>
    <source>
        <strain>ATCC 51907 / DSM 11121 / KW20 / Rd</strain>
    </source>
</reference>
<dbReference type="EMBL" id="L42023">
    <property type="protein sequence ID" value="AAC21715.1"/>
    <property type="status" value="ALT_INIT"/>
    <property type="molecule type" value="Genomic_DNA"/>
</dbReference>
<dbReference type="PIR" id="E64044">
    <property type="entry name" value="E64044"/>
</dbReference>
<dbReference type="RefSeq" id="NP_438210.2">
    <property type="nucleotide sequence ID" value="NC_000907.1"/>
</dbReference>
<dbReference type="SMR" id="P44474"/>
<dbReference type="STRING" id="71421.HI_0037"/>
<dbReference type="EnsemblBacteria" id="AAC21715">
    <property type="protein sequence ID" value="AAC21715"/>
    <property type="gene ID" value="HI_0037"/>
</dbReference>
<dbReference type="KEGG" id="hin:HI_0037"/>
<dbReference type="PATRIC" id="fig|71421.8.peg.37"/>
<dbReference type="eggNOG" id="COG1077">
    <property type="taxonomic scope" value="Bacteria"/>
</dbReference>
<dbReference type="HOGENOM" id="CLU_052037_0_0_6"/>
<dbReference type="OrthoDB" id="9768127at2"/>
<dbReference type="PhylomeDB" id="P44474"/>
<dbReference type="BioCyc" id="HINF71421:G1GJ1-37-MONOMER"/>
<dbReference type="Proteomes" id="UP000000579">
    <property type="component" value="Chromosome"/>
</dbReference>
<dbReference type="GO" id="GO:0005737">
    <property type="term" value="C:cytoplasm"/>
    <property type="evidence" value="ECO:0007669"/>
    <property type="project" value="UniProtKB-SubCell"/>
</dbReference>
<dbReference type="GO" id="GO:0005524">
    <property type="term" value="F:ATP binding"/>
    <property type="evidence" value="ECO:0007669"/>
    <property type="project" value="UniProtKB-KW"/>
</dbReference>
<dbReference type="GO" id="GO:0000902">
    <property type="term" value="P:cell morphogenesis"/>
    <property type="evidence" value="ECO:0007669"/>
    <property type="project" value="InterPro"/>
</dbReference>
<dbReference type="GO" id="GO:0008360">
    <property type="term" value="P:regulation of cell shape"/>
    <property type="evidence" value="ECO:0007669"/>
    <property type="project" value="UniProtKB-UniRule"/>
</dbReference>
<dbReference type="CDD" id="cd10225">
    <property type="entry name" value="ASKHA_NBD_MreB-like"/>
    <property type="match status" value="1"/>
</dbReference>
<dbReference type="FunFam" id="3.30.420.40:FF:000014">
    <property type="entry name" value="Rod shape-determining protein MreB"/>
    <property type="match status" value="1"/>
</dbReference>
<dbReference type="FunFam" id="3.30.420.40:FF:000016">
    <property type="entry name" value="Rod shape-determining protein mreB"/>
    <property type="match status" value="1"/>
</dbReference>
<dbReference type="Gene3D" id="3.30.420.40">
    <property type="match status" value="3"/>
</dbReference>
<dbReference type="HAMAP" id="MF_02207">
    <property type="entry name" value="MreB"/>
    <property type="match status" value="1"/>
</dbReference>
<dbReference type="InterPro" id="IPR043129">
    <property type="entry name" value="ATPase_NBD"/>
</dbReference>
<dbReference type="InterPro" id="IPR004753">
    <property type="entry name" value="MreB"/>
</dbReference>
<dbReference type="InterPro" id="IPR056546">
    <property type="entry name" value="MreB_MamK-like"/>
</dbReference>
<dbReference type="NCBIfam" id="TIGR00904">
    <property type="entry name" value="mreB"/>
    <property type="match status" value="1"/>
</dbReference>
<dbReference type="NCBIfam" id="NF010539">
    <property type="entry name" value="PRK13927.1"/>
    <property type="match status" value="1"/>
</dbReference>
<dbReference type="PANTHER" id="PTHR42749">
    <property type="entry name" value="CELL SHAPE-DETERMINING PROTEIN MREB"/>
    <property type="match status" value="1"/>
</dbReference>
<dbReference type="PANTHER" id="PTHR42749:SF1">
    <property type="entry name" value="CELL SHAPE-DETERMINING PROTEIN MREB"/>
    <property type="match status" value="1"/>
</dbReference>
<dbReference type="Pfam" id="PF06723">
    <property type="entry name" value="MreB_Mbl"/>
    <property type="match status" value="1"/>
</dbReference>
<dbReference type="PRINTS" id="PR01652">
    <property type="entry name" value="SHAPEPROTEIN"/>
</dbReference>
<dbReference type="SUPFAM" id="SSF53067">
    <property type="entry name" value="Actin-like ATPase domain"/>
    <property type="match status" value="2"/>
</dbReference>